<gene>
    <name evidence="1" type="primary">metE</name>
    <name type="ordered locus">MW0332</name>
</gene>
<comment type="function">
    <text evidence="1">Catalyzes the transfer of a methyl group from 5-methyltetrahydrofolate to homocysteine resulting in methionine formation.</text>
</comment>
<comment type="catalytic activity">
    <reaction evidence="1">
        <text>5-methyltetrahydropteroyltri-L-glutamate + L-homocysteine = tetrahydropteroyltri-L-glutamate + L-methionine</text>
        <dbReference type="Rhea" id="RHEA:21196"/>
        <dbReference type="ChEBI" id="CHEBI:57844"/>
        <dbReference type="ChEBI" id="CHEBI:58140"/>
        <dbReference type="ChEBI" id="CHEBI:58199"/>
        <dbReference type="ChEBI" id="CHEBI:58207"/>
        <dbReference type="EC" id="2.1.1.14"/>
    </reaction>
</comment>
<comment type="cofactor">
    <cofactor evidence="1">
        <name>Zn(2+)</name>
        <dbReference type="ChEBI" id="CHEBI:29105"/>
    </cofactor>
    <text evidence="1">Binds 1 zinc ion per subunit.</text>
</comment>
<comment type="pathway">
    <text evidence="1">Amino-acid biosynthesis; L-methionine biosynthesis via de novo pathway; L-methionine from L-homocysteine (MetE route): step 1/1.</text>
</comment>
<comment type="similarity">
    <text evidence="1">Belongs to the vitamin-B12 independent methionine synthase family.</text>
</comment>
<organism>
    <name type="scientific">Staphylococcus aureus (strain MW2)</name>
    <dbReference type="NCBI Taxonomy" id="196620"/>
    <lineage>
        <taxon>Bacteria</taxon>
        <taxon>Bacillati</taxon>
        <taxon>Bacillota</taxon>
        <taxon>Bacilli</taxon>
        <taxon>Bacillales</taxon>
        <taxon>Staphylococcaceae</taxon>
        <taxon>Staphylococcus</taxon>
    </lineage>
</organism>
<sequence length="742" mass="85076">MTTIKTSNLGFPRLGRKREWKKAIESYWAKKISKEELDQTLTDLHKENLLLQKYYHLDSIPVGDFSLYDHILDTSLLFNIIPERFQGRTIDDDLLFDIARGNKDHVASALIKWFNTNYHYIVPEWDNVEPKVSRNVLLDRFKYAQSLNVNAHPVIVGPITFVKLSKGGHQTFEEKVKTLLPLYKEVFESLIDAGAEYIQVDEPILVTDDSESYENITREAYDYFEKAGVAKKLVIQTYFERAHLKFLSSLPVGGLGLDFVHDNGYNLKQIEAGDFDKSKTLYAGIIDGRNVWASDIEAKKVLIDKLLAHTNELVIQPSSSLLHVPVSLDDETLDTSVGEGLSFATEKLDELDALRRLFNQNDSVKYDKLKARYERFQNQSFKNLDYDFESVRTSRQSPFAQRIEQQQKRLNLPDLPTTTIGSFPQSREVRKYRADWKNKRITDEAYETFLKNEIARWIKIQEDIGLDVLVHGEFERNDMVEFFGEKLQGFLVTKFGWVQSYGSRAVKPPIIYGDVKWTAPLTVDETVYAQSLTDKPVKGMLTGPVTILNWSFERVDLPRKVVQDQIALAINEEVLALEAAGIKVIQVDEPALREGLPLRSEYHEQYLKDAVLSFKLATSSVRDETQIHTHMCYSQFGQIIHAIHDLDADVISIETSRSHGDLIKDFEDINYDLGIGLGVYDIHSPRIPTKEEITTAINRSLQQIDRSLFWVNPDCGLKTRKEEEVKDALTVLVNAVKAKRQE</sequence>
<accession>Q8NY94</accession>
<reference key="1">
    <citation type="journal article" date="2002" name="Lancet">
        <title>Genome and virulence determinants of high virulence community-acquired MRSA.</title>
        <authorList>
            <person name="Baba T."/>
            <person name="Takeuchi F."/>
            <person name="Kuroda M."/>
            <person name="Yuzawa H."/>
            <person name="Aoki K."/>
            <person name="Oguchi A."/>
            <person name="Nagai Y."/>
            <person name="Iwama N."/>
            <person name="Asano K."/>
            <person name="Naimi T."/>
            <person name="Kuroda H."/>
            <person name="Cui L."/>
            <person name="Yamamoto K."/>
            <person name="Hiramatsu K."/>
        </authorList>
    </citation>
    <scope>NUCLEOTIDE SEQUENCE [LARGE SCALE GENOMIC DNA]</scope>
    <source>
        <strain>MW2</strain>
    </source>
</reference>
<proteinExistence type="inferred from homology"/>
<dbReference type="EC" id="2.1.1.14" evidence="1"/>
<dbReference type="EMBL" id="BA000033">
    <property type="protein sequence ID" value="BAB94197.1"/>
    <property type="molecule type" value="Genomic_DNA"/>
</dbReference>
<dbReference type="RefSeq" id="WP_000207619.1">
    <property type="nucleotide sequence ID" value="NC_003923.1"/>
</dbReference>
<dbReference type="SMR" id="Q8NY94"/>
<dbReference type="KEGG" id="sam:MW0332"/>
<dbReference type="HOGENOM" id="CLU_013175_0_0_9"/>
<dbReference type="UniPathway" id="UPA00051">
    <property type="reaction ID" value="UER00082"/>
</dbReference>
<dbReference type="GO" id="GO:0003871">
    <property type="term" value="F:5-methyltetrahydropteroyltriglutamate-homocysteine S-methyltransferase activity"/>
    <property type="evidence" value="ECO:0007669"/>
    <property type="project" value="UniProtKB-UniRule"/>
</dbReference>
<dbReference type="GO" id="GO:0008270">
    <property type="term" value="F:zinc ion binding"/>
    <property type="evidence" value="ECO:0007669"/>
    <property type="project" value="InterPro"/>
</dbReference>
<dbReference type="GO" id="GO:0009086">
    <property type="term" value="P:methionine biosynthetic process"/>
    <property type="evidence" value="ECO:0007669"/>
    <property type="project" value="UniProtKB-UniRule"/>
</dbReference>
<dbReference type="GO" id="GO:0032259">
    <property type="term" value="P:methylation"/>
    <property type="evidence" value="ECO:0007669"/>
    <property type="project" value="UniProtKB-KW"/>
</dbReference>
<dbReference type="CDD" id="cd03311">
    <property type="entry name" value="CIMS_C_terminal_like"/>
    <property type="match status" value="1"/>
</dbReference>
<dbReference type="CDD" id="cd03312">
    <property type="entry name" value="CIMS_N_terminal_like"/>
    <property type="match status" value="1"/>
</dbReference>
<dbReference type="Gene3D" id="3.20.20.210">
    <property type="match status" value="2"/>
</dbReference>
<dbReference type="HAMAP" id="MF_00172">
    <property type="entry name" value="Meth_synth"/>
    <property type="match status" value="1"/>
</dbReference>
<dbReference type="InterPro" id="IPR013215">
    <property type="entry name" value="Cbl-indep_Met_Synth_N"/>
</dbReference>
<dbReference type="InterPro" id="IPR006276">
    <property type="entry name" value="Cobalamin-indep_Met_synthase"/>
</dbReference>
<dbReference type="InterPro" id="IPR002629">
    <property type="entry name" value="Met_Synth_C/arc"/>
</dbReference>
<dbReference type="InterPro" id="IPR038071">
    <property type="entry name" value="UROD/MetE-like_sf"/>
</dbReference>
<dbReference type="NCBIfam" id="TIGR01371">
    <property type="entry name" value="met_syn_B12ind"/>
    <property type="match status" value="1"/>
</dbReference>
<dbReference type="NCBIfam" id="NF003556">
    <property type="entry name" value="PRK05222.1"/>
    <property type="match status" value="1"/>
</dbReference>
<dbReference type="PANTHER" id="PTHR30519">
    <property type="entry name" value="5-METHYLTETRAHYDROPTEROYLTRIGLUTAMATE--HOMOCYSTEINE METHYLTRANSFERASE"/>
    <property type="match status" value="1"/>
</dbReference>
<dbReference type="Pfam" id="PF08267">
    <property type="entry name" value="Meth_synt_1"/>
    <property type="match status" value="1"/>
</dbReference>
<dbReference type="Pfam" id="PF01717">
    <property type="entry name" value="Meth_synt_2"/>
    <property type="match status" value="1"/>
</dbReference>
<dbReference type="PIRSF" id="PIRSF000382">
    <property type="entry name" value="MeTrfase_B12_ind"/>
    <property type="match status" value="1"/>
</dbReference>
<dbReference type="SUPFAM" id="SSF51726">
    <property type="entry name" value="UROD/MetE-like"/>
    <property type="match status" value="2"/>
</dbReference>
<feature type="chain" id="PRO_0000098663" description="5-methyltetrahydropteroyltriglutamate--homocysteine methyltransferase">
    <location>
        <begin position="1"/>
        <end position="742"/>
    </location>
</feature>
<feature type="active site" description="Proton donor" evidence="1">
    <location>
        <position position="683"/>
    </location>
</feature>
<feature type="binding site" evidence="1">
    <location>
        <begin position="18"/>
        <end position="21"/>
    </location>
    <ligand>
        <name>5-methyltetrahydropteroyltri-L-glutamate</name>
        <dbReference type="ChEBI" id="CHEBI:58207"/>
    </ligand>
</feature>
<feature type="binding site" evidence="1">
    <location>
        <position position="112"/>
    </location>
    <ligand>
        <name>5-methyltetrahydropteroyltri-L-glutamate</name>
        <dbReference type="ChEBI" id="CHEBI:58207"/>
    </ligand>
</feature>
<feature type="binding site" evidence="1">
    <location>
        <begin position="420"/>
        <end position="422"/>
    </location>
    <ligand>
        <name>L-homocysteine</name>
        <dbReference type="ChEBI" id="CHEBI:58199"/>
    </ligand>
</feature>
<feature type="binding site" evidence="1">
    <location>
        <begin position="420"/>
        <end position="422"/>
    </location>
    <ligand>
        <name>L-methionine</name>
        <dbReference type="ChEBI" id="CHEBI:57844"/>
    </ligand>
</feature>
<feature type="binding site" evidence="1">
    <location>
        <position position="473"/>
    </location>
    <ligand>
        <name>L-homocysteine</name>
        <dbReference type="ChEBI" id="CHEBI:58199"/>
    </ligand>
</feature>
<feature type="binding site" evidence="1">
    <location>
        <position position="473"/>
    </location>
    <ligand>
        <name>L-methionine</name>
        <dbReference type="ChEBI" id="CHEBI:57844"/>
    </ligand>
</feature>
<feature type="binding site" evidence="1">
    <location>
        <position position="550"/>
    </location>
    <ligand>
        <name>5-methyltetrahydropteroyltri-L-glutamate</name>
        <dbReference type="ChEBI" id="CHEBI:58207"/>
    </ligand>
</feature>
<feature type="binding site" evidence="1">
    <location>
        <position position="588"/>
    </location>
    <ligand>
        <name>L-homocysteine</name>
        <dbReference type="ChEBI" id="CHEBI:58199"/>
    </ligand>
</feature>
<feature type="binding site" evidence="1">
    <location>
        <position position="588"/>
    </location>
    <ligand>
        <name>L-methionine</name>
        <dbReference type="ChEBI" id="CHEBI:57844"/>
    </ligand>
</feature>
<feature type="binding site" evidence="1">
    <location>
        <position position="594"/>
    </location>
    <ligand>
        <name>5-methyltetrahydropteroyltri-L-glutamate</name>
        <dbReference type="ChEBI" id="CHEBI:58207"/>
    </ligand>
</feature>
<feature type="binding site" evidence="1">
    <location>
        <position position="630"/>
    </location>
    <ligand>
        <name>Zn(2+)</name>
        <dbReference type="ChEBI" id="CHEBI:29105"/>
        <note>catalytic</note>
    </ligand>
</feature>
<feature type="binding site" evidence="1">
    <location>
        <position position="632"/>
    </location>
    <ligand>
        <name>Zn(2+)</name>
        <dbReference type="ChEBI" id="CHEBI:29105"/>
        <note>catalytic</note>
    </ligand>
</feature>
<feature type="binding site" evidence="1">
    <location>
        <position position="654"/>
    </location>
    <ligand>
        <name>Zn(2+)</name>
        <dbReference type="ChEBI" id="CHEBI:29105"/>
        <note>catalytic</note>
    </ligand>
</feature>
<feature type="binding site" evidence="1">
    <location>
        <position position="715"/>
    </location>
    <ligand>
        <name>Zn(2+)</name>
        <dbReference type="ChEBI" id="CHEBI:29105"/>
        <note>catalytic</note>
    </ligand>
</feature>
<name>METE_STAAW</name>
<keyword id="KW-0028">Amino-acid biosynthesis</keyword>
<keyword id="KW-0479">Metal-binding</keyword>
<keyword id="KW-0486">Methionine biosynthesis</keyword>
<keyword id="KW-0489">Methyltransferase</keyword>
<keyword id="KW-0677">Repeat</keyword>
<keyword id="KW-0808">Transferase</keyword>
<keyword id="KW-0862">Zinc</keyword>
<evidence type="ECO:0000255" key="1">
    <source>
        <dbReference type="HAMAP-Rule" id="MF_00172"/>
    </source>
</evidence>
<protein>
    <recommendedName>
        <fullName evidence="1">5-methyltetrahydropteroyltriglutamate--homocysteine methyltransferase</fullName>
        <ecNumber evidence="1">2.1.1.14</ecNumber>
    </recommendedName>
    <alternativeName>
        <fullName evidence="1">Cobalamin-independent methionine synthase</fullName>
    </alternativeName>
    <alternativeName>
        <fullName evidence="1">Methionine synthase, vitamin-B12 independent isozyme</fullName>
    </alternativeName>
</protein>